<name>QTRT2_HUMAN</name>
<organism>
    <name type="scientific">Homo sapiens</name>
    <name type="common">Human</name>
    <dbReference type="NCBI Taxonomy" id="9606"/>
    <lineage>
        <taxon>Eukaryota</taxon>
        <taxon>Metazoa</taxon>
        <taxon>Chordata</taxon>
        <taxon>Craniata</taxon>
        <taxon>Vertebrata</taxon>
        <taxon>Euteleostomi</taxon>
        <taxon>Mammalia</taxon>
        <taxon>Eutheria</taxon>
        <taxon>Euarchontoglires</taxon>
        <taxon>Primates</taxon>
        <taxon>Haplorrhini</taxon>
        <taxon>Catarrhini</taxon>
        <taxon>Hominidae</taxon>
        <taxon>Homo</taxon>
    </lineage>
</organism>
<protein>
    <recommendedName>
        <fullName evidence="1">Queuine tRNA-ribosyltransferase accessory subunit 2</fullName>
    </recommendedName>
    <alternativeName>
        <fullName evidence="1">Queuine tRNA-ribosyltransferase domain-containing protein 1</fullName>
    </alternativeName>
</protein>
<feature type="chain" id="PRO_0000295633" description="Queuine tRNA-ribosyltransferase accessory subunit 2">
    <location>
        <begin position="1"/>
        <end position="415"/>
    </location>
</feature>
<feature type="binding site" evidence="1 5 9">
    <location>
        <position position="351"/>
    </location>
    <ligand>
        <name>Zn(2+)</name>
        <dbReference type="ChEBI" id="CHEBI:29105"/>
    </ligand>
</feature>
<feature type="binding site" evidence="1 5 9">
    <location>
        <position position="353"/>
    </location>
    <ligand>
        <name>Zn(2+)</name>
        <dbReference type="ChEBI" id="CHEBI:29105"/>
    </ligand>
</feature>
<feature type="binding site" evidence="1 5 9">
    <location>
        <position position="356"/>
    </location>
    <ligand>
        <name>Zn(2+)</name>
        <dbReference type="ChEBI" id="CHEBI:29105"/>
    </ligand>
</feature>
<feature type="binding site" evidence="1 5 9">
    <location>
        <position position="382"/>
    </location>
    <ligand>
        <name>Zn(2+)</name>
        <dbReference type="ChEBI" id="CHEBI:29105"/>
    </ligand>
</feature>
<feature type="splice variant" id="VSP_045140" description="In isoform 2." evidence="6">
    <location>
        <begin position="1"/>
        <end position="123"/>
    </location>
</feature>
<feature type="splice variant" id="VSP_045141" description="In isoform 3." evidence="6">
    <original>MKLSLTKVVNGCRLGKIKNLGKTGDHTMDIPGCLLYTKTGSAPHLTHHTLHNIHGVPAMAQLTLSSLAEHHEVLTEYKEGVGKFIGMPESLLYCSLHDPVSPCPAGYVTNK</original>
    <variation>MVCWQ</variation>
    <location>
        <begin position="1"/>
        <end position="111"/>
    </location>
</feature>
<feature type="splice variant" id="VSP_046859" description="In isoform 4." evidence="7">
    <original>M</original>
    <variation>MVCWQDLEESLRM</variation>
    <location>
        <position position="1"/>
    </location>
</feature>
<feature type="mutagenesis site" description="Does not significantly affect ability to promote formation of hypermodified nucleoside queuosine tRNA." evidence="5">
    <original>W</original>
    <variation>A</variation>
    <location>
        <position position="116"/>
    </location>
</feature>
<feature type="mutagenesis site" description="Does not significantly affect ability to promote formation of hypermodified nucleoside queuosine tRNA." evidence="5">
    <original>V</original>
    <variation>D</variation>
    <location>
        <position position="118"/>
    </location>
</feature>
<feature type="mutagenesis site" description="Decreased affinity for tRNAs, leading to decreased formation of hypermodified nucleoside queuosine tRNA." evidence="5">
    <original>R</original>
    <variation>E</variation>
    <location>
        <position position="121"/>
    </location>
</feature>
<feature type="mutagenesis site" description="Does not significantly affect ability to promote formation of hypermodified nucleoside queuosine tRNA." evidence="5">
    <original>K</original>
    <variation>E</variation>
    <location>
        <position position="152"/>
    </location>
</feature>
<feature type="mutagenesis site" description="Decreased affinity for tRNAs." evidence="5">
    <original>KRVR</original>
    <variation>ERVS</variation>
    <location>
        <begin position="158"/>
        <end position="161"/>
    </location>
</feature>
<feature type="mutagenesis site" description="Does not significantly affect ability to promote formation of hypermodified nucleoside queuosine tRNA." evidence="5">
    <original>K</original>
    <variation>E</variation>
    <variation>S</variation>
    <location>
        <position position="158"/>
    </location>
</feature>
<feature type="mutagenesis site" description="Does not significantly affect ability to promote formation of hypermodified nucleoside queuosine tRNA." evidence="5">
    <original>R</original>
    <variation>E</variation>
    <location>
        <position position="161"/>
    </location>
</feature>
<feature type="sequence conflict" description="In Ref. 2; CAG33577." evidence="8" ref="2">
    <original>D</original>
    <variation>G</variation>
    <location>
        <position position="246"/>
    </location>
</feature>
<feature type="strand" evidence="10">
    <location>
        <begin position="3"/>
        <end position="9"/>
    </location>
</feature>
<feature type="strand" evidence="10">
    <location>
        <begin position="12"/>
        <end position="17"/>
    </location>
</feature>
<feature type="strand" evidence="10">
    <location>
        <begin position="21"/>
        <end position="24"/>
    </location>
</feature>
<feature type="strand" evidence="10">
    <location>
        <begin position="28"/>
        <end position="36"/>
    </location>
</feature>
<feature type="strand" evidence="11">
    <location>
        <begin position="38"/>
        <end position="41"/>
    </location>
</feature>
<feature type="helix" evidence="10">
    <location>
        <begin position="47"/>
        <end position="51"/>
    </location>
</feature>
<feature type="strand" evidence="10">
    <location>
        <begin position="58"/>
        <end position="63"/>
    </location>
</feature>
<feature type="helix" evidence="10">
    <location>
        <begin position="64"/>
        <end position="67"/>
    </location>
</feature>
<feature type="helix" evidence="10">
    <location>
        <begin position="68"/>
        <end position="70"/>
    </location>
</feature>
<feature type="helix" evidence="10">
    <location>
        <begin position="71"/>
        <end position="77"/>
    </location>
</feature>
<feature type="helix" evidence="10">
    <location>
        <begin position="81"/>
        <end position="84"/>
    </location>
</feature>
<feature type="strand" evidence="10">
    <location>
        <begin position="90"/>
        <end position="97"/>
    </location>
</feature>
<feature type="strand" evidence="11">
    <location>
        <begin position="99"/>
        <end position="101"/>
    </location>
</feature>
<feature type="strand" evidence="10">
    <location>
        <begin position="113"/>
        <end position="116"/>
    </location>
</feature>
<feature type="strand" evidence="10">
    <location>
        <begin position="121"/>
        <end position="124"/>
    </location>
</feature>
<feature type="helix" evidence="10">
    <location>
        <begin position="126"/>
        <end position="136"/>
    </location>
</feature>
<feature type="strand" evidence="10">
    <location>
        <begin position="139"/>
        <end position="142"/>
    </location>
</feature>
<feature type="helix" evidence="10">
    <location>
        <begin position="148"/>
        <end position="151"/>
    </location>
</feature>
<feature type="helix" evidence="10">
    <location>
        <begin position="157"/>
        <end position="180"/>
    </location>
</feature>
<feature type="helix" evidence="10">
    <location>
        <begin position="182"/>
        <end position="185"/>
    </location>
</feature>
<feature type="strand" evidence="10">
    <location>
        <begin position="187"/>
        <end position="193"/>
    </location>
</feature>
<feature type="helix" evidence="10">
    <location>
        <begin position="199"/>
        <end position="210"/>
    </location>
</feature>
<feature type="strand" evidence="10">
    <location>
        <begin position="215"/>
        <end position="219"/>
    </location>
</feature>
<feature type="turn" evidence="10">
    <location>
        <begin position="226"/>
        <end position="228"/>
    </location>
</feature>
<feature type="helix" evidence="10">
    <location>
        <begin position="229"/>
        <end position="240"/>
    </location>
</feature>
<feature type="strand" evidence="10">
    <location>
        <begin position="249"/>
        <end position="253"/>
    </location>
</feature>
<feature type="helix" evidence="10">
    <location>
        <begin position="257"/>
        <end position="265"/>
    </location>
</feature>
<feature type="strand" evidence="10">
    <location>
        <begin position="270"/>
        <end position="272"/>
    </location>
</feature>
<feature type="helix" evidence="10">
    <location>
        <begin position="274"/>
        <end position="281"/>
    </location>
</feature>
<feature type="strand" evidence="10">
    <location>
        <begin position="284"/>
        <end position="286"/>
    </location>
</feature>
<feature type="strand" evidence="10">
    <location>
        <begin position="330"/>
        <end position="334"/>
    </location>
</feature>
<feature type="helix" evidence="10">
    <location>
        <begin position="338"/>
        <end position="340"/>
    </location>
</feature>
<feature type="helix" evidence="10">
    <location>
        <begin position="354"/>
        <end position="358"/>
    </location>
</feature>
<feature type="helix" evidence="10">
    <location>
        <begin position="361"/>
        <end position="369"/>
    </location>
</feature>
<feature type="helix" evidence="10">
    <location>
        <begin position="373"/>
        <end position="399"/>
    </location>
</feature>
<feature type="helix" evidence="10">
    <location>
        <begin position="403"/>
        <end position="410"/>
    </location>
</feature>
<dbReference type="EMBL" id="AK023022">
    <property type="protein sequence ID" value="BAB14361.1"/>
    <property type="molecule type" value="mRNA"/>
</dbReference>
<dbReference type="EMBL" id="AK296938">
    <property type="protein sequence ID" value="BAH12458.1"/>
    <property type="molecule type" value="mRNA"/>
</dbReference>
<dbReference type="EMBL" id="AK299313">
    <property type="protein sequence ID" value="BAH12998.1"/>
    <property type="molecule type" value="mRNA"/>
</dbReference>
<dbReference type="EMBL" id="CR457296">
    <property type="protein sequence ID" value="CAG33577.1"/>
    <property type="molecule type" value="mRNA"/>
</dbReference>
<dbReference type="EMBL" id="AL833709">
    <property type="status" value="NOT_ANNOTATED_CDS"/>
    <property type="molecule type" value="mRNA"/>
</dbReference>
<dbReference type="EMBL" id="AC092896">
    <property type="status" value="NOT_ANNOTATED_CDS"/>
    <property type="molecule type" value="Genomic_DNA"/>
</dbReference>
<dbReference type="EMBL" id="AC128687">
    <property type="status" value="NOT_ANNOTATED_CDS"/>
    <property type="molecule type" value="Genomic_DNA"/>
</dbReference>
<dbReference type="EMBL" id="CH471052">
    <property type="protein sequence ID" value="EAW79613.1"/>
    <property type="molecule type" value="Genomic_DNA"/>
</dbReference>
<dbReference type="EMBL" id="BC034559">
    <property type="protein sequence ID" value="AAH34559.1"/>
    <property type="molecule type" value="mRNA"/>
</dbReference>
<dbReference type="EMBL" id="BC039265">
    <property type="protein sequence ID" value="AAH39265.1"/>
    <property type="molecule type" value="mRNA"/>
</dbReference>
<dbReference type="CCDS" id="CCDS33828.1">
    <molecule id="Q9H974-1"/>
</dbReference>
<dbReference type="CCDS" id="CCDS58844.1">
    <molecule id="Q9H974-4"/>
</dbReference>
<dbReference type="CCDS" id="CCDS58845.1">
    <molecule id="Q9H974-3"/>
</dbReference>
<dbReference type="CCDS" id="CCDS58846.1">
    <molecule id="Q9H974-2"/>
</dbReference>
<dbReference type="RefSeq" id="NP_001243764.1">
    <molecule id="Q9H974-4"/>
    <property type="nucleotide sequence ID" value="NM_001256835.2"/>
</dbReference>
<dbReference type="RefSeq" id="NP_001243765.1">
    <molecule id="Q9H974-3"/>
    <property type="nucleotide sequence ID" value="NM_001256836.2"/>
</dbReference>
<dbReference type="RefSeq" id="NP_001243766.1">
    <molecule id="Q9H974-2"/>
    <property type="nucleotide sequence ID" value="NM_001256837.2"/>
</dbReference>
<dbReference type="RefSeq" id="NP_078914.1">
    <molecule id="Q9H974-1"/>
    <property type="nucleotide sequence ID" value="NM_024638.4"/>
</dbReference>
<dbReference type="RefSeq" id="XP_005247827.1">
    <property type="nucleotide sequence ID" value="XM_005247770.3"/>
</dbReference>
<dbReference type="RefSeq" id="XP_016862671.1">
    <property type="nucleotide sequence ID" value="XM_017007182.1"/>
</dbReference>
<dbReference type="RefSeq" id="XP_016862672.1">
    <property type="nucleotide sequence ID" value="XM_017007183.1"/>
</dbReference>
<dbReference type="RefSeq" id="XP_047304891.1">
    <molecule id="Q9H974-2"/>
    <property type="nucleotide sequence ID" value="XM_047448935.1"/>
</dbReference>
<dbReference type="RefSeq" id="XP_047304892.1">
    <molecule id="Q9H974-2"/>
    <property type="nucleotide sequence ID" value="XM_047448936.1"/>
</dbReference>
<dbReference type="RefSeq" id="XP_054203859.1">
    <molecule id="Q9H974-2"/>
    <property type="nucleotide sequence ID" value="XM_054347884.1"/>
</dbReference>
<dbReference type="RefSeq" id="XP_054203860.1">
    <molecule id="Q9H974-2"/>
    <property type="nucleotide sequence ID" value="XM_054347885.1"/>
</dbReference>
<dbReference type="PDB" id="7NQ4">
    <property type="method" value="X-ray"/>
    <property type="resolution" value="2.88 A"/>
    <property type="chains" value="B=1-415"/>
</dbReference>
<dbReference type="PDB" id="8OMR">
    <property type="method" value="EM"/>
    <property type="resolution" value="3.30 A"/>
    <property type="chains" value="B=1-415"/>
</dbReference>
<dbReference type="PDBsum" id="7NQ4"/>
<dbReference type="PDBsum" id="8OMR"/>
<dbReference type="EMDB" id="EMD-16976"/>
<dbReference type="SASBDB" id="Q9H974"/>
<dbReference type="SMR" id="Q9H974"/>
<dbReference type="BioGRID" id="122812">
    <property type="interactions" value="58"/>
</dbReference>
<dbReference type="ComplexPortal" id="CPX-6662">
    <property type="entry name" value="tRNA-guanine transglycosylase complex"/>
</dbReference>
<dbReference type="FunCoup" id="Q9H974">
    <property type="interactions" value="1943"/>
</dbReference>
<dbReference type="IntAct" id="Q9H974">
    <property type="interactions" value="15"/>
</dbReference>
<dbReference type="STRING" id="9606.ENSP00000420682"/>
<dbReference type="GlyGen" id="Q9H974">
    <property type="glycosylation" value="1 site, 1 O-linked glycan (1 site)"/>
</dbReference>
<dbReference type="iPTMnet" id="Q9H974"/>
<dbReference type="PhosphoSitePlus" id="Q9H974"/>
<dbReference type="BioMuta" id="QTRT2"/>
<dbReference type="DMDM" id="74752736"/>
<dbReference type="jPOST" id="Q9H974"/>
<dbReference type="MassIVE" id="Q9H974"/>
<dbReference type="PaxDb" id="9606-ENSP00000420682"/>
<dbReference type="PeptideAtlas" id="Q9H974"/>
<dbReference type="ProteomicsDB" id="6576"/>
<dbReference type="ProteomicsDB" id="6713"/>
<dbReference type="ProteomicsDB" id="81289">
    <molecule id="Q9H974-1"/>
</dbReference>
<dbReference type="Pumba" id="Q9H974"/>
<dbReference type="Antibodypedia" id="32626">
    <property type="antibodies" value="117 antibodies from 19 providers"/>
</dbReference>
<dbReference type="DNASU" id="79691"/>
<dbReference type="Ensembl" id="ENST00000281273.8">
    <molecule id="Q9H974-1"/>
    <property type="protein sequence ID" value="ENSP00000281273.4"/>
    <property type="gene ID" value="ENSG00000151576.10"/>
</dbReference>
<dbReference type="Ensembl" id="ENST00000479882.5">
    <molecule id="Q9H974-2"/>
    <property type="protein sequence ID" value="ENSP00000418056.1"/>
    <property type="gene ID" value="ENSG00000151576.10"/>
</dbReference>
<dbReference type="Ensembl" id="ENST00000485050.5">
    <molecule id="Q9H974-4"/>
    <property type="protein sequence ID" value="ENSP00000420682.1"/>
    <property type="gene ID" value="ENSG00000151576.10"/>
</dbReference>
<dbReference type="Ensembl" id="ENST00000493014.1">
    <molecule id="Q9H974-3"/>
    <property type="protein sequence ID" value="ENSP00000419169.1"/>
    <property type="gene ID" value="ENSG00000151576.10"/>
</dbReference>
<dbReference type="GeneID" id="79691"/>
<dbReference type="KEGG" id="hsa:79691"/>
<dbReference type="MANE-Select" id="ENST00000281273.8">
    <property type="protein sequence ID" value="ENSP00000281273.4"/>
    <property type="RefSeq nucleotide sequence ID" value="NM_024638.4"/>
    <property type="RefSeq protein sequence ID" value="NP_078914.1"/>
</dbReference>
<dbReference type="UCSC" id="uc003eay.5">
    <molecule id="Q9H974-1"/>
    <property type="organism name" value="human"/>
</dbReference>
<dbReference type="AGR" id="HGNC:25771"/>
<dbReference type="CTD" id="79691"/>
<dbReference type="GeneCards" id="QTRT2"/>
<dbReference type="HGNC" id="HGNC:25771">
    <property type="gene designation" value="QTRT2"/>
</dbReference>
<dbReference type="HPA" id="ENSG00000151576">
    <property type="expression patterns" value="Low tissue specificity"/>
</dbReference>
<dbReference type="neXtProt" id="NX_Q9H974"/>
<dbReference type="OpenTargets" id="ENSG00000151576"/>
<dbReference type="PharmGKB" id="PA134925851"/>
<dbReference type="VEuPathDB" id="HostDB:ENSG00000151576"/>
<dbReference type="eggNOG" id="KOG3909">
    <property type="taxonomic scope" value="Eukaryota"/>
</dbReference>
<dbReference type="GeneTree" id="ENSGT00530000063679"/>
<dbReference type="HOGENOM" id="CLU_037350_0_0_1"/>
<dbReference type="InParanoid" id="Q9H974"/>
<dbReference type="OrthoDB" id="27601at2759"/>
<dbReference type="PAN-GO" id="Q9H974">
    <property type="GO annotations" value="1 GO annotation based on evolutionary models"/>
</dbReference>
<dbReference type="PhylomeDB" id="Q9H974"/>
<dbReference type="TreeFam" id="TF317105"/>
<dbReference type="BioCyc" id="MetaCyc:HS07747-MONOMER"/>
<dbReference type="BRENDA" id="2.4.2.64">
    <property type="organism ID" value="2681"/>
</dbReference>
<dbReference type="PathwayCommons" id="Q9H974"/>
<dbReference type="Reactome" id="R-HSA-6782315">
    <property type="pathway name" value="tRNA modification in the nucleus and cytosol"/>
</dbReference>
<dbReference type="SignaLink" id="Q9H974"/>
<dbReference type="BioGRID-ORCS" id="79691">
    <property type="hits" value="5 hits in 1136 CRISPR screens"/>
</dbReference>
<dbReference type="ChiTaRS" id="QTRT2">
    <property type="organism name" value="human"/>
</dbReference>
<dbReference type="GenomeRNAi" id="79691"/>
<dbReference type="Pharos" id="Q9H974">
    <property type="development level" value="Tbio"/>
</dbReference>
<dbReference type="PRO" id="PR:Q9H974"/>
<dbReference type="Proteomes" id="UP000005640">
    <property type="component" value="Chromosome 3"/>
</dbReference>
<dbReference type="RNAct" id="Q9H974">
    <property type="molecule type" value="protein"/>
</dbReference>
<dbReference type="Bgee" id="ENSG00000151576">
    <property type="expression patterns" value="Expressed in adrenal tissue and 167 other cell types or tissues"/>
</dbReference>
<dbReference type="ExpressionAtlas" id="Q9H974">
    <property type="expression patterns" value="baseline and differential"/>
</dbReference>
<dbReference type="GO" id="GO:0005737">
    <property type="term" value="C:cytoplasm"/>
    <property type="evidence" value="ECO:0000250"/>
    <property type="project" value="UniProtKB"/>
</dbReference>
<dbReference type="GO" id="GO:0032473">
    <property type="term" value="C:cytoplasmic side of mitochondrial outer membrane"/>
    <property type="evidence" value="ECO:0007669"/>
    <property type="project" value="Ensembl"/>
</dbReference>
<dbReference type="GO" id="GO:0005741">
    <property type="term" value="C:mitochondrial outer membrane"/>
    <property type="evidence" value="ECO:0000304"/>
    <property type="project" value="Reactome"/>
</dbReference>
<dbReference type="GO" id="GO:0005739">
    <property type="term" value="C:mitochondrion"/>
    <property type="evidence" value="ECO:0006056"/>
    <property type="project" value="FlyBase"/>
</dbReference>
<dbReference type="GO" id="GO:1990234">
    <property type="term" value="C:transferase complex"/>
    <property type="evidence" value="ECO:0000353"/>
    <property type="project" value="ComplexPortal"/>
</dbReference>
<dbReference type="GO" id="GO:0120507">
    <property type="term" value="C:tRNA-guanine transglycosylase complex"/>
    <property type="evidence" value="ECO:0000353"/>
    <property type="project" value="UniProtKB"/>
</dbReference>
<dbReference type="GO" id="GO:0046872">
    <property type="term" value="F:metal ion binding"/>
    <property type="evidence" value="ECO:0007669"/>
    <property type="project" value="UniProtKB-KW"/>
</dbReference>
<dbReference type="GO" id="GO:0046982">
    <property type="term" value="F:protein heterodimerization activity"/>
    <property type="evidence" value="ECO:0000314"/>
    <property type="project" value="UniProtKB"/>
</dbReference>
<dbReference type="GO" id="GO:0042803">
    <property type="term" value="F:protein homodimerization activity"/>
    <property type="evidence" value="ECO:0000314"/>
    <property type="project" value="UniProtKB"/>
</dbReference>
<dbReference type="GO" id="GO:0000049">
    <property type="term" value="F:tRNA binding"/>
    <property type="evidence" value="ECO:0000314"/>
    <property type="project" value="UniProtKB"/>
</dbReference>
<dbReference type="GO" id="GO:0008479">
    <property type="term" value="F:tRNA-guanosine(34) queuine transglycosylase activity"/>
    <property type="evidence" value="ECO:0007669"/>
    <property type="project" value="UniProtKB-UniRule"/>
</dbReference>
<dbReference type="GO" id="GO:0101030">
    <property type="term" value="P:tRNA-guanine transglycosylation"/>
    <property type="evidence" value="ECO:0000314"/>
    <property type="project" value="UniProtKB"/>
</dbReference>
<dbReference type="Gene3D" id="3.20.20.105">
    <property type="entry name" value="Queuine tRNA-ribosyltransferase-like"/>
    <property type="match status" value="1"/>
</dbReference>
<dbReference type="HAMAP" id="MF_03043">
    <property type="entry name" value="QTRT2"/>
    <property type="match status" value="1"/>
</dbReference>
<dbReference type="InterPro" id="IPR028592">
    <property type="entry name" value="QTRTD1"/>
</dbReference>
<dbReference type="InterPro" id="IPR050852">
    <property type="entry name" value="Queuine_tRNA-ribosyltrfase"/>
</dbReference>
<dbReference type="InterPro" id="IPR036511">
    <property type="entry name" value="TGT-like_sf"/>
</dbReference>
<dbReference type="InterPro" id="IPR002616">
    <property type="entry name" value="tRNA_ribo_trans-like"/>
</dbReference>
<dbReference type="NCBIfam" id="TIGR00449">
    <property type="entry name" value="tgt_general"/>
    <property type="match status" value="1"/>
</dbReference>
<dbReference type="PANTHER" id="PTHR46064">
    <property type="entry name" value="QUEUINE TRNA-RIBOSYLTRANSFERASE ACCESSORY SUBUNIT 2"/>
    <property type="match status" value="1"/>
</dbReference>
<dbReference type="PANTHER" id="PTHR46064:SF1">
    <property type="entry name" value="QUEUINE TRNA-RIBOSYLTRANSFERASE ACCESSORY SUBUNIT 2"/>
    <property type="match status" value="1"/>
</dbReference>
<dbReference type="Pfam" id="PF01702">
    <property type="entry name" value="TGT"/>
    <property type="match status" value="1"/>
</dbReference>
<dbReference type="SUPFAM" id="SSF51713">
    <property type="entry name" value="tRNA-guanine transglycosylase"/>
    <property type="match status" value="1"/>
</dbReference>
<proteinExistence type="evidence at protein level"/>
<reference key="1">
    <citation type="journal article" date="2004" name="Nat. Genet.">
        <title>Complete sequencing and characterization of 21,243 full-length human cDNAs.</title>
        <authorList>
            <person name="Ota T."/>
            <person name="Suzuki Y."/>
            <person name="Nishikawa T."/>
            <person name="Otsuki T."/>
            <person name="Sugiyama T."/>
            <person name="Irie R."/>
            <person name="Wakamatsu A."/>
            <person name="Hayashi K."/>
            <person name="Sato H."/>
            <person name="Nagai K."/>
            <person name="Kimura K."/>
            <person name="Makita H."/>
            <person name="Sekine M."/>
            <person name="Obayashi M."/>
            <person name="Nishi T."/>
            <person name="Shibahara T."/>
            <person name="Tanaka T."/>
            <person name="Ishii S."/>
            <person name="Yamamoto J."/>
            <person name="Saito K."/>
            <person name="Kawai Y."/>
            <person name="Isono Y."/>
            <person name="Nakamura Y."/>
            <person name="Nagahari K."/>
            <person name="Murakami K."/>
            <person name="Yasuda T."/>
            <person name="Iwayanagi T."/>
            <person name="Wagatsuma M."/>
            <person name="Shiratori A."/>
            <person name="Sudo H."/>
            <person name="Hosoiri T."/>
            <person name="Kaku Y."/>
            <person name="Kodaira H."/>
            <person name="Kondo H."/>
            <person name="Sugawara M."/>
            <person name="Takahashi M."/>
            <person name="Kanda K."/>
            <person name="Yokoi T."/>
            <person name="Furuya T."/>
            <person name="Kikkawa E."/>
            <person name="Omura Y."/>
            <person name="Abe K."/>
            <person name="Kamihara K."/>
            <person name="Katsuta N."/>
            <person name="Sato K."/>
            <person name="Tanikawa M."/>
            <person name="Yamazaki M."/>
            <person name="Ninomiya K."/>
            <person name="Ishibashi T."/>
            <person name="Yamashita H."/>
            <person name="Murakawa K."/>
            <person name="Fujimori K."/>
            <person name="Tanai H."/>
            <person name="Kimata M."/>
            <person name="Watanabe M."/>
            <person name="Hiraoka S."/>
            <person name="Chiba Y."/>
            <person name="Ishida S."/>
            <person name="Ono Y."/>
            <person name="Takiguchi S."/>
            <person name="Watanabe S."/>
            <person name="Yosida M."/>
            <person name="Hotuta T."/>
            <person name="Kusano J."/>
            <person name="Kanehori K."/>
            <person name="Takahashi-Fujii A."/>
            <person name="Hara H."/>
            <person name="Tanase T.-O."/>
            <person name="Nomura Y."/>
            <person name="Togiya S."/>
            <person name="Komai F."/>
            <person name="Hara R."/>
            <person name="Takeuchi K."/>
            <person name="Arita M."/>
            <person name="Imose N."/>
            <person name="Musashino K."/>
            <person name="Yuuki H."/>
            <person name="Oshima A."/>
            <person name="Sasaki N."/>
            <person name="Aotsuka S."/>
            <person name="Yoshikawa Y."/>
            <person name="Matsunawa H."/>
            <person name="Ichihara T."/>
            <person name="Shiohata N."/>
            <person name="Sano S."/>
            <person name="Moriya S."/>
            <person name="Momiyama H."/>
            <person name="Satoh N."/>
            <person name="Takami S."/>
            <person name="Terashima Y."/>
            <person name="Suzuki O."/>
            <person name="Nakagawa S."/>
            <person name="Senoh A."/>
            <person name="Mizoguchi H."/>
            <person name="Goto Y."/>
            <person name="Shimizu F."/>
            <person name="Wakebe H."/>
            <person name="Hishigaki H."/>
            <person name="Watanabe T."/>
            <person name="Sugiyama A."/>
            <person name="Takemoto M."/>
            <person name="Kawakami B."/>
            <person name="Yamazaki M."/>
            <person name="Watanabe K."/>
            <person name="Kumagai A."/>
            <person name="Itakura S."/>
            <person name="Fukuzumi Y."/>
            <person name="Fujimori Y."/>
            <person name="Komiyama M."/>
            <person name="Tashiro H."/>
            <person name="Tanigami A."/>
            <person name="Fujiwara T."/>
            <person name="Ono T."/>
            <person name="Yamada K."/>
            <person name="Fujii Y."/>
            <person name="Ozaki K."/>
            <person name="Hirao M."/>
            <person name="Ohmori Y."/>
            <person name="Kawabata A."/>
            <person name="Hikiji T."/>
            <person name="Kobatake N."/>
            <person name="Inagaki H."/>
            <person name="Ikema Y."/>
            <person name="Okamoto S."/>
            <person name="Okitani R."/>
            <person name="Kawakami T."/>
            <person name="Noguchi S."/>
            <person name="Itoh T."/>
            <person name="Shigeta K."/>
            <person name="Senba T."/>
            <person name="Matsumura K."/>
            <person name="Nakajima Y."/>
            <person name="Mizuno T."/>
            <person name="Morinaga M."/>
            <person name="Sasaki M."/>
            <person name="Togashi T."/>
            <person name="Oyama M."/>
            <person name="Hata H."/>
            <person name="Watanabe M."/>
            <person name="Komatsu T."/>
            <person name="Mizushima-Sugano J."/>
            <person name="Satoh T."/>
            <person name="Shirai Y."/>
            <person name="Takahashi Y."/>
            <person name="Nakagawa K."/>
            <person name="Okumura K."/>
            <person name="Nagase T."/>
            <person name="Nomura N."/>
            <person name="Kikuchi H."/>
            <person name="Masuho Y."/>
            <person name="Yamashita R."/>
            <person name="Nakai K."/>
            <person name="Yada T."/>
            <person name="Nakamura Y."/>
            <person name="Ohara O."/>
            <person name="Isogai T."/>
            <person name="Sugano S."/>
        </authorList>
    </citation>
    <scope>NUCLEOTIDE SEQUENCE [LARGE SCALE MRNA] (ISOFORMS 1; 2 AND 3)</scope>
    <source>
        <tissue>Tongue</tissue>
    </source>
</reference>
<reference key="2">
    <citation type="submission" date="2004-06" db="EMBL/GenBank/DDBJ databases">
        <title>Cloning of human full open reading frames in Gateway(TM) system entry vector (pDONR201).</title>
        <authorList>
            <person name="Ebert L."/>
            <person name="Schick M."/>
            <person name="Neubert P."/>
            <person name="Schatten R."/>
            <person name="Henze S."/>
            <person name="Korn B."/>
        </authorList>
    </citation>
    <scope>NUCLEOTIDE SEQUENCE [LARGE SCALE MRNA] (ISOFORM 1)</scope>
</reference>
<reference key="3">
    <citation type="journal article" date="2007" name="BMC Genomics">
        <title>The full-ORF clone resource of the German cDNA consortium.</title>
        <authorList>
            <person name="Bechtel S."/>
            <person name="Rosenfelder H."/>
            <person name="Duda A."/>
            <person name="Schmidt C.P."/>
            <person name="Ernst U."/>
            <person name="Wellenreuther R."/>
            <person name="Mehrle A."/>
            <person name="Schuster C."/>
            <person name="Bahr A."/>
            <person name="Bloecker H."/>
            <person name="Heubner D."/>
            <person name="Hoerlein A."/>
            <person name="Michel G."/>
            <person name="Wedler H."/>
            <person name="Koehrer K."/>
            <person name="Ottenwaelder B."/>
            <person name="Poustka A."/>
            <person name="Wiemann S."/>
            <person name="Schupp I."/>
        </authorList>
    </citation>
    <scope>NUCLEOTIDE SEQUENCE [LARGE SCALE MRNA] (ISOFORM 4)</scope>
    <source>
        <tissue>Lymph node</tissue>
    </source>
</reference>
<reference key="4">
    <citation type="journal article" date="2006" name="Nature">
        <title>The DNA sequence, annotation and analysis of human chromosome 3.</title>
        <authorList>
            <person name="Muzny D.M."/>
            <person name="Scherer S.E."/>
            <person name="Kaul R."/>
            <person name="Wang J."/>
            <person name="Yu J."/>
            <person name="Sudbrak R."/>
            <person name="Buhay C.J."/>
            <person name="Chen R."/>
            <person name="Cree A."/>
            <person name="Ding Y."/>
            <person name="Dugan-Rocha S."/>
            <person name="Gill R."/>
            <person name="Gunaratne P."/>
            <person name="Harris R.A."/>
            <person name="Hawes A.C."/>
            <person name="Hernandez J."/>
            <person name="Hodgson A.V."/>
            <person name="Hume J."/>
            <person name="Jackson A."/>
            <person name="Khan Z.M."/>
            <person name="Kovar-Smith C."/>
            <person name="Lewis L.R."/>
            <person name="Lozado R.J."/>
            <person name="Metzker M.L."/>
            <person name="Milosavljevic A."/>
            <person name="Miner G.R."/>
            <person name="Morgan M.B."/>
            <person name="Nazareth L.V."/>
            <person name="Scott G."/>
            <person name="Sodergren E."/>
            <person name="Song X.-Z."/>
            <person name="Steffen D."/>
            <person name="Wei S."/>
            <person name="Wheeler D.A."/>
            <person name="Wright M.W."/>
            <person name="Worley K.C."/>
            <person name="Yuan Y."/>
            <person name="Zhang Z."/>
            <person name="Adams C.Q."/>
            <person name="Ansari-Lari M.A."/>
            <person name="Ayele M."/>
            <person name="Brown M.J."/>
            <person name="Chen G."/>
            <person name="Chen Z."/>
            <person name="Clendenning J."/>
            <person name="Clerc-Blankenburg K.P."/>
            <person name="Chen R."/>
            <person name="Chen Z."/>
            <person name="Davis C."/>
            <person name="Delgado O."/>
            <person name="Dinh H.H."/>
            <person name="Dong W."/>
            <person name="Draper H."/>
            <person name="Ernst S."/>
            <person name="Fu G."/>
            <person name="Gonzalez-Garay M.L."/>
            <person name="Garcia D.K."/>
            <person name="Gillett W."/>
            <person name="Gu J."/>
            <person name="Hao B."/>
            <person name="Haugen E."/>
            <person name="Havlak P."/>
            <person name="He X."/>
            <person name="Hennig S."/>
            <person name="Hu S."/>
            <person name="Huang W."/>
            <person name="Jackson L.R."/>
            <person name="Jacob L.S."/>
            <person name="Kelly S.H."/>
            <person name="Kube M."/>
            <person name="Levy R."/>
            <person name="Li Z."/>
            <person name="Liu B."/>
            <person name="Liu J."/>
            <person name="Liu W."/>
            <person name="Lu J."/>
            <person name="Maheshwari M."/>
            <person name="Nguyen B.-V."/>
            <person name="Okwuonu G.O."/>
            <person name="Palmeiri A."/>
            <person name="Pasternak S."/>
            <person name="Perez L.M."/>
            <person name="Phelps K.A."/>
            <person name="Plopper F.J."/>
            <person name="Qiang B."/>
            <person name="Raymond C."/>
            <person name="Rodriguez R."/>
            <person name="Saenphimmachak C."/>
            <person name="Santibanez J."/>
            <person name="Shen H."/>
            <person name="Shen Y."/>
            <person name="Subramanian S."/>
            <person name="Tabor P.E."/>
            <person name="Verduzco D."/>
            <person name="Waldron L."/>
            <person name="Wang J."/>
            <person name="Wang J."/>
            <person name="Wang Q."/>
            <person name="Williams G.A."/>
            <person name="Wong G.K.-S."/>
            <person name="Yao Z."/>
            <person name="Zhang J."/>
            <person name="Zhang X."/>
            <person name="Zhao G."/>
            <person name="Zhou J."/>
            <person name="Zhou Y."/>
            <person name="Nelson D."/>
            <person name="Lehrach H."/>
            <person name="Reinhardt R."/>
            <person name="Naylor S.L."/>
            <person name="Yang H."/>
            <person name="Olson M."/>
            <person name="Weinstock G."/>
            <person name="Gibbs R.A."/>
        </authorList>
    </citation>
    <scope>NUCLEOTIDE SEQUENCE [LARGE SCALE GENOMIC DNA]</scope>
</reference>
<reference key="5">
    <citation type="submission" date="2005-09" db="EMBL/GenBank/DDBJ databases">
        <authorList>
            <person name="Mural R.J."/>
            <person name="Istrail S."/>
            <person name="Sutton G.G."/>
            <person name="Florea L."/>
            <person name="Halpern A.L."/>
            <person name="Mobarry C.M."/>
            <person name="Lippert R."/>
            <person name="Walenz B."/>
            <person name="Shatkay H."/>
            <person name="Dew I."/>
            <person name="Miller J.R."/>
            <person name="Flanigan M.J."/>
            <person name="Edwards N.J."/>
            <person name="Bolanos R."/>
            <person name="Fasulo D."/>
            <person name="Halldorsson B.V."/>
            <person name="Hannenhalli S."/>
            <person name="Turner R."/>
            <person name="Yooseph S."/>
            <person name="Lu F."/>
            <person name="Nusskern D.R."/>
            <person name="Shue B.C."/>
            <person name="Zheng X.H."/>
            <person name="Zhong F."/>
            <person name="Delcher A.L."/>
            <person name="Huson D.H."/>
            <person name="Kravitz S.A."/>
            <person name="Mouchard L."/>
            <person name="Reinert K."/>
            <person name="Remington K.A."/>
            <person name="Clark A.G."/>
            <person name="Waterman M.S."/>
            <person name="Eichler E.E."/>
            <person name="Adams M.D."/>
            <person name="Hunkapiller M.W."/>
            <person name="Myers E.W."/>
            <person name="Venter J.C."/>
        </authorList>
    </citation>
    <scope>NUCLEOTIDE SEQUENCE [LARGE SCALE GENOMIC DNA]</scope>
</reference>
<reference key="6">
    <citation type="journal article" date="2004" name="Genome Res.">
        <title>The status, quality, and expansion of the NIH full-length cDNA project: the Mammalian Gene Collection (MGC).</title>
        <authorList>
            <consortium name="The MGC Project Team"/>
        </authorList>
    </citation>
    <scope>NUCLEOTIDE SEQUENCE [LARGE SCALE MRNA] (ISOFORM 1)</scope>
    <source>
        <tissue>Lymph</tissue>
        <tissue>Testis</tissue>
    </source>
</reference>
<reference key="7">
    <citation type="journal article" date="2010" name="RNA">
        <title>Characterization of the human tRNA-guanine transglycosylase: confirmation of the heterodimeric subunit structure.</title>
        <authorList>
            <person name="Chen Y.C."/>
            <person name="Kelly V.P."/>
            <person name="Stachura S.V."/>
            <person name="Garcia G.A."/>
        </authorList>
    </citation>
    <scope>SUBUNIT</scope>
    <scope>IDENTIFICATION BY MASS SPECTROMETRY</scope>
</reference>
<reference key="8">
    <citation type="journal article" date="2011" name="BMC Syst. Biol.">
        <title>Initial characterization of the human central proteome.</title>
        <authorList>
            <person name="Burkard T.R."/>
            <person name="Planyavsky M."/>
            <person name="Kaupe I."/>
            <person name="Breitwieser F.P."/>
            <person name="Buerckstuemmer T."/>
            <person name="Bennett K.L."/>
            <person name="Superti-Furga G."/>
            <person name="Colinge J."/>
        </authorList>
    </citation>
    <scope>IDENTIFICATION BY MASS SPECTROMETRY [LARGE SCALE ANALYSIS]</scope>
</reference>
<reference key="9">
    <citation type="journal article" date="2018" name="Biomolecules">
        <title>Crystal Structure of the Human tRNA Guanine Transglycosylase Catalytic Subunit QTRT1.</title>
        <authorList>
            <person name="Johannsson S."/>
            <person name="Neumann P."/>
            <person name="Ficner R."/>
        </authorList>
    </citation>
    <scope>SUBUNIT</scope>
</reference>
<reference key="10">
    <citation type="journal article" date="2021" name="Nucleic Acids Res.">
        <title>The human tRNA-guanine transglycosylase displays promiscuous nucleobase preference but strict tRNA specificity.</title>
        <authorList>
            <person name="Fergus C."/>
            <person name="Al-Qasem M."/>
            <person name="Cotter M."/>
            <person name="McDonnell C.M."/>
            <person name="Sorrentino E."/>
            <person name="Chevot F."/>
            <person name="Hokamp K."/>
            <person name="Senge M.O."/>
            <person name="Southern J.M."/>
            <person name="Connon S.J."/>
            <person name="Kelly V.P."/>
        </authorList>
    </citation>
    <scope>FUNCTION</scope>
</reference>
<reference evidence="9" key="11">
    <citation type="journal article" date="2021" name="RNA Biol.">
        <title>Structural and functional insights into human tRNA guanine transglycosylase.</title>
        <authorList>
            <person name="Sievers K."/>
            <person name="Welp L."/>
            <person name="Urlaub H."/>
            <person name="Ficner R."/>
        </authorList>
    </citation>
    <scope>X-RAY CRYSTALLOGRAPHY (2.88 ANGSTROMS) IN COMPLEX WITH QTRT1 AND ZINC</scope>
    <scope>FUNCTION</scope>
    <scope>COFACTOR</scope>
    <scope>SUBUNIT</scope>
    <scope>MUTAGENESIS OF TRP-116; VAL-118; ARG-121; LYS-152; 158-LYS--ARG-161; LYS-158 AND ARG-161</scope>
</reference>
<sequence length="415" mass="46713">MKLSLTKVVNGCRLGKIKNLGKTGDHTMDIPGCLLYTKTGSAPHLTHHTLHNIHGVPAMAQLTLSSLAEHHEVLTEYKEGVGKFIGMPESLLYCSLHDPVSPCPAGYVTNKSVSVWSVAGRVEMTVSKFMAIQKALQPDWFQCLSDGEVSCKEATSIKRVRKSVDRSLLFLDNCLRLQEESEVLQKSVIIGVIEGGDVMEERLRSARETAKRPVGGFLLDGFQGNPTTLEARLRLLSSVTAELPEDKPRLISGVSRPDEVLECIERGVDLFESFFPYQVTERGCALTFSFDYQPNPEETLLQQNGTQEEIKCMDQIKKIETTGCNQEITSFEINLKEKKYQEDFNPLVRGCSCYCCKNHTRAYIHHLLVTNELLAGVLLMMHNFEHYFGFFHYIREALKSDKLAQLKELIHRQAS</sequence>
<comment type="function">
    <text evidence="1 4 5">Non-catalytic subunit of the queuine tRNA-ribosyltransferase (TGT) that catalyzes the base-exchange of a guanine (G) residue with queuine (Q) at position 34 (anticodon wobble position) in tRNAs with GU(N) anticodons (tRNA-Asp, -Asn, -His and -Tyr), resulting in the hypermodified nucleoside queuosine (7-(((4,5-cis-dihydroxy-2-cyclopenten-1-yl)amino)methyl)-7-deazaguanosine).</text>
</comment>
<comment type="cofactor">
    <cofactor evidence="1 5">
        <name>Zn(2+)</name>
        <dbReference type="ChEBI" id="CHEBI:29105"/>
    </cofactor>
    <text evidence="1 5">Binds 1 zinc ion per subunit.</text>
</comment>
<comment type="subunit">
    <text evidence="1 2 3 5">Heterodimer of a catalytic subunit QTRT1 and an accessory subunit QTRT2.</text>
</comment>
<comment type="interaction">
    <interactant intactId="EBI-1221028">
        <id>Q9H974</id>
    </interactant>
    <interactant intactId="EBI-716832">
        <id>Q9BXR0</id>
        <label>QTRT1</label>
    </interactant>
    <organismsDiffer>false</organismsDiffer>
    <experiments>2</experiments>
</comment>
<comment type="subcellular location">
    <subcellularLocation>
        <location evidence="1">Cytoplasm</location>
    </subcellularLocation>
    <subcellularLocation>
        <location evidence="1">Mitochondrion outer membrane</location>
        <topology evidence="1">Peripheral membrane protein</topology>
        <orientation evidence="1">Cytoplasmic side</orientation>
    </subcellularLocation>
    <text evidence="1">May associate with the mitochondrion outer membrane.</text>
</comment>
<comment type="alternative products">
    <event type="alternative splicing"/>
    <isoform>
        <id>Q9H974-1</id>
        <name>1</name>
        <sequence type="displayed"/>
    </isoform>
    <isoform>
        <id>Q9H974-2</id>
        <name>2</name>
        <sequence type="described" ref="VSP_045140"/>
    </isoform>
    <isoform>
        <id>Q9H974-3</id>
        <name>3</name>
        <sequence type="described" ref="VSP_045141"/>
    </isoform>
    <isoform>
        <id>Q9H974-4</id>
        <name>4</name>
        <sequence type="described" ref="VSP_046859"/>
    </isoform>
</comment>
<comment type="similarity">
    <text evidence="1">Belongs to the queuine tRNA-ribosyltransferase family. QTRT2 subfamily.</text>
</comment>
<evidence type="ECO:0000255" key="1">
    <source>
        <dbReference type="HAMAP-Rule" id="MF_03043"/>
    </source>
</evidence>
<evidence type="ECO:0000269" key="2">
    <source>
    </source>
</evidence>
<evidence type="ECO:0000269" key="3">
    <source>
    </source>
</evidence>
<evidence type="ECO:0000269" key="4">
    <source>
    </source>
</evidence>
<evidence type="ECO:0000269" key="5">
    <source>
    </source>
</evidence>
<evidence type="ECO:0000303" key="6">
    <source>
    </source>
</evidence>
<evidence type="ECO:0000303" key="7">
    <source>
    </source>
</evidence>
<evidence type="ECO:0000305" key="8"/>
<evidence type="ECO:0007744" key="9">
    <source>
        <dbReference type="PDB" id="7NQ4"/>
    </source>
</evidence>
<evidence type="ECO:0007829" key="10">
    <source>
        <dbReference type="PDB" id="7NQ4"/>
    </source>
</evidence>
<evidence type="ECO:0007829" key="11">
    <source>
        <dbReference type="PDB" id="8OMR"/>
    </source>
</evidence>
<keyword id="KW-0002">3D-structure</keyword>
<keyword id="KW-0025">Alternative splicing</keyword>
<keyword id="KW-0963">Cytoplasm</keyword>
<keyword id="KW-0472">Membrane</keyword>
<keyword id="KW-0479">Metal-binding</keyword>
<keyword id="KW-0496">Mitochondrion</keyword>
<keyword id="KW-1000">Mitochondrion outer membrane</keyword>
<keyword id="KW-1267">Proteomics identification</keyword>
<keyword id="KW-1185">Reference proteome</keyword>
<keyword id="KW-0819">tRNA processing</keyword>
<keyword id="KW-0862">Zinc</keyword>
<accession>Q9H974</accession>
<accession>A6NGE9</accession>
<accession>B7Z472</accession>
<accession>B7Z5R2</accession>
<accession>J3KR78</accession>
<accession>Q6IA59</accession>
<gene>
    <name evidence="1" type="primary">QTRT2</name>
    <name type="synonym">QTRTD1</name>
</gene>